<gene>
    <name type="primary">Klk8</name>
    <name type="synonym">Nrpn</name>
    <name type="synonym">Prss19</name>
</gene>
<reference key="1">
    <citation type="journal article" date="1995" name="J. Neurosci.">
        <title>Expression and activity-dependent changes of a novel limbic-serine protease gene in the hippocampus.</title>
        <authorList>
            <person name="Chen Z.-L."/>
            <person name="Yoshida S."/>
            <person name="Kato K."/>
            <person name="Momota Y."/>
            <person name="Suzuki J."/>
            <person name="Tanaka T."/>
            <person name="Ito J."/>
            <person name="Nishino H."/>
            <person name="Aimoto S."/>
            <person name="Kiyama H."/>
            <person name="Shiosaka S."/>
        </authorList>
    </citation>
    <scope>NUCLEOTIDE SEQUENCE [MRNA]</scope>
    <scope>TISSUE SPECIFICITY</scope>
    <source>
        <strain>BALB/cJ</strain>
        <tissue>Hippocampus</tissue>
    </source>
</reference>
<reference key="2">
    <citation type="journal article" date="2000" name="Cytogenet. Cell Genet.">
        <title>Assignment of the neuropsin gene (Prss19) to mouse chromosome band 7B4 by in situ hybridization.</title>
        <authorList>
            <person name="Yoshida S."/>
            <person name="Hirata A."/>
            <person name="Inoue N."/>
            <person name="Shiosaka S."/>
        </authorList>
    </citation>
    <scope>NUCLEOTIDE SEQUENCE [GENOMIC DNA]</scope>
</reference>
<reference key="3">
    <citation type="journal article" date="2004" name="Genome Res.">
        <title>The status, quality, and expansion of the NIH full-length cDNA project: the Mammalian Gene Collection (MGC).</title>
        <authorList>
            <consortium name="The MGC Project Team"/>
        </authorList>
    </citation>
    <scope>NUCLEOTIDE SEQUENCE [LARGE SCALE MRNA]</scope>
    <source>
        <strain>Czech II</strain>
        <tissue>Mammary gland</tissue>
    </source>
</reference>
<reference key="4">
    <citation type="journal article" date="1998" name="J. Biol. Chem.">
        <title>Characterization of recombinant and brain neuropsin, a plasticity-related serine protease.</title>
        <authorList>
            <person name="Shimizu C."/>
            <person name="Yoshida S."/>
            <person name="Shibata M."/>
            <person name="Kato K."/>
            <person name="Momota Y."/>
            <person name="Matsumoto K."/>
            <person name="Shiosaka T."/>
            <person name="Midorikawa R."/>
            <person name="Kamachi T."/>
            <person name="Kawabe A."/>
            <person name="Shiosaka S."/>
        </authorList>
    </citation>
    <scope>PROTEIN SEQUENCE OF N-TERMINUS</scope>
    <scope>FUNCTION</scope>
    <scope>ACTIVITY REGULATION</scope>
    <scope>BIOPHYSICOCHEMICAL PROPERTIES</scope>
    <scope>SUBCELLULAR LOCATION</scope>
    <scope>MASS SPECTROMETRY</scope>
    <source>
        <strain>BALB/cJ</strain>
        <tissue>Brain</tissue>
    </source>
</reference>
<reference key="5">
    <citation type="journal article" date="2002" name="Mol. Cell. Endocrinol.">
        <title>Estrogen-independent expression of neuropsin, a serine protease in the vagina of mice exposed neonatally to diethylstilbestrol.</title>
        <authorList>
            <person name="Katsu Y."/>
            <person name="Takasu E."/>
            <person name="Iguchi T."/>
        </authorList>
    </citation>
    <scope>NUCLEOTIDE SEQUENCE [MRNA] OF 85-260</scope>
    <scope>TISSUE SPECIFICITY</scope>
    <source>
        <strain>C57BL/6J</strain>
    </source>
</reference>
<reference key="6">
    <citation type="journal article" date="1995" name="Neurosci. Res.">
        <title>Ontogeny of neuropsin mRNA expression in the mouse brain.</title>
        <authorList>
            <person name="Suzuki J."/>
            <person name="Yoshida S."/>
            <person name="Chen Z.-L."/>
            <person name="Momota Y."/>
            <person name="Kato K."/>
            <person name="Hirata A."/>
            <person name="Shiosaka S."/>
        </authorList>
    </citation>
    <scope>TISSUE SPECIFICITY</scope>
    <scope>DEVELOPMENTAL STAGE</scope>
</reference>
<reference key="7">
    <citation type="journal article" date="1996" name="Brain Res.">
        <title>Kindling induces neuropsin mRNA in the mouse brain.</title>
        <authorList>
            <person name="Okabe A."/>
            <person name="Momota Y."/>
            <person name="Yoshida S."/>
            <person name="Hirata A."/>
            <person name="Ito J."/>
            <person name="Nishino H."/>
            <person name="Shiosaka S."/>
        </authorList>
    </citation>
    <scope>INDUCTION</scope>
</reference>
<reference key="8">
    <citation type="journal article" date="1997" name="Brain Res.">
        <title>Effects of oxidative stress on the expression of limbic-specific protease neuropsin and avoidance learning in mice.</title>
        <authorList>
            <person name="Akita H."/>
            <person name="Matsuyama T."/>
            <person name="Iso H."/>
            <person name="Sugita M."/>
            <person name="Yoshida S."/>
        </authorList>
    </citation>
    <scope>INDUCTION</scope>
</reference>
<reference key="9">
    <citation type="journal article" date="1998" name="Eur. J. Neurosci.">
        <title>Blockade of neuropsin, a serine protease, ameliorates kindling epilepsy.</title>
        <authorList>
            <person name="Momota Y."/>
            <person name="Yoshida S."/>
            <person name="Ito J."/>
            <person name="Shibata M."/>
            <person name="Kato K."/>
            <person name="Sakurai K."/>
            <person name="Matsumoto K."/>
            <person name="Shiosaka S."/>
        </authorList>
    </citation>
    <scope>TISSUE SPECIFICITY</scope>
    <scope>INDUCTION</scope>
</reference>
<reference key="10">
    <citation type="journal article" date="1998" name="J. Invest. Dermatol.">
        <title>Expression of neuropsin in the keratinizing epithelial tissue - immunohistochemical analysis of wild-type and nude mice.</title>
        <authorList>
            <person name="Inoue N."/>
            <person name="Kuwae K."/>
            <person name="Ishida-Yamamoto A."/>
            <person name="Iizuka H."/>
            <person name="Shibata M."/>
            <person name="Yoshida S."/>
            <person name="Kato K."/>
            <person name="Shiosaka S."/>
        </authorList>
    </citation>
    <scope>TISSUE SPECIFICITY</scope>
</reference>
<reference key="11">
    <citation type="journal article" date="1999" name="Arch. Dermatol. Res.">
        <title>Effect of 12-O-tetradecanoyl-phorbol ester and incisional wounding on neuropsin mRNA and its protein expression in murine skin.</title>
        <authorList>
            <person name="Kitayoshi H."/>
            <person name="Inoue N."/>
            <person name="Kuwae K."/>
            <person name="Chen Z.-L."/>
            <person name="Sato H."/>
            <person name="Ohta T."/>
            <person name="Hosokawa K."/>
            <person name="Itami S."/>
            <person name="Yoshikawa K."/>
            <person name="Yoshida S."/>
            <person name="Shiosaka S."/>
        </authorList>
    </citation>
    <scope>INDUCTION</scope>
</reference>
<reference key="12">
    <citation type="journal article" date="1999" name="Brain Res.">
        <title>Injury induces neuropsin mRNA in the central nervous system.</title>
        <authorList>
            <person name="Tomizawa K."/>
            <person name="He X.-P."/>
            <person name="Yamanaka H."/>
            <person name="Shiosaka S."/>
            <person name="Yoshida S."/>
        </authorList>
    </citation>
    <scope>INDUCTION</scope>
</reference>
<reference key="13">
    <citation type="journal article" date="2000" name="Eur. J. Neurosci.">
        <title>Neuropsin regulates an early phase of Schaffer-collateral long-term potentiation in the murine hippocampus.</title>
        <authorList>
            <person name="Komai S."/>
            <person name="Matsuyama T."/>
            <person name="Matsumoto K."/>
            <person name="Kato K."/>
            <person name="Kobayashi M."/>
            <person name="Imamura K."/>
            <person name="Yoshida S."/>
            <person name="Ugawa S."/>
            <person name="Shiosaka S."/>
        </authorList>
    </citation>
    <scope>FUNCTION</scope>
</reference>
<reference key="14">
    <citation type="journal article" date="2001" name="J. Neurosci.">
        <title>Loss of hippocampal serine protease BSP1/neuropsin predisposes to global seizure activity.</title>
        <authorList>
            <person name="Davies B."/>
            <person name="Kearns I.R."/>
            <person name="Ure J."/>
            <person name="Davies C.H."/>
            <person name="Lathe R."/>
        </authorList>
    </citation>
    <scope>DISRUPTION PHENOTYPE</scope>
</reference>
<reference key="15">
    <citation type="journal article" date="2001" name="Mol. Cell. Neurosci.">
        <title>Abnormalities of synapses and neurons in the hippocampus of neuropsin-deficient mice.</title>
        <authorList>
            <person name="Hirata A."/>
            <person name="Yoshida S."/>
            <person name="Inoue N."/>
            <person name="Matsumoto-Miyai K."/>
            <person name="Ninomiya A."/>
            <person name="Taniguchi M."/>
            <person name="Matsuyama T."/>
            <person name="Kato K."/>
            <person name="Iizasa H."/>
            <person name="Kataoka Y."/>
            <person name="Yoshida N."/>
            <person name="Shiosaka S."/>
        </authorList>
    </citation>
    <scope>DISRUPTION PHENOTYPE</scope>
</reference>
<reference key="16">
    <citation type="journal article" date="2001" name="Neurosci. Res.">
        <title>Expression of neuropsin in oligodendrocytes after injury to the CNS.</title>
        <authorList>
            <person name="He X.-P."/>
            <person name="Shiosaka S."/>
            <person name="Yoshida S."/>
        </authorList>
    </citation>
    <scope>INDUCTION</scope>
</reference>
<reference key="17">
    <citation type="journal article" date="2002" name="Neurosci. Lett.">
        <title>Extracellular serine protease neuropsin (KLK8) modulates neurite outgrowth and fasciculation of mouse hippocampal neurons in culture.</title>
        <authorList>
            <person name="Oka T."/>
            <person name="Akisada M."/>
            <person name="Okabe A."/>
            <person name="Sakurai K."/>
            <person name="Shiosaka S."/>
            <person name="Kato K."/>
        </authorList>
    </citation>
    <scope>FUNCTION</scope>
</reference>
<reference key="18">
    <citation type="journal article" date="2003" name="Br. J. Dermatol.">
        <title>Prolonged recovery of ultraviolet B-irradiated skin in neuropsin (KLK8)-deficient mice.</title>
        <authorList>
            <person name="Kirihara T."/>
            <person name="Matsumoto-Miyai K."/>
            <person name="Nakamura Y."/>
            <person name="Sadayama T."/>
            <person name="Yoshida S."/>
            <person name="Shiosaka S."/>
        </authorList>
    </citation>
    <scope>INDUCTION</scope>
    <scope>DISRUPTION PHENOTYPE</scope>
</reference>
<reference key="19">
    <citation type="journal article" date="2003" name="J. Neurosci.">
        <title>NMDA-dependent proteolysis of presynaptic adhesion molecule L1 in the hippocampus by neuropsin.</title>
        <authorList>
            <person name="Matsumoto-Miyai K."/>
            <person name="Ninomiya A."/>
            <person name="Yamasaki H."/>
            <person name="Tamura H."/>
            <person name="Nakamura Y."/>
            <person name="Shiosaka S."/>
        </authorList>
    </citation>
    <scope>FUNCTION</scope>
</reference>
<reference key="20">
    <citation type="journal article" date="2006" name="J. Cell Sci.">
        <title>Role of neuropsin in formation and maturation of Schaffer-collateral L1cam-immunoreactive synaptic boutons.</title>
        <authorList>
            <person name="Nakamura Y."/>
            <person name="Tamura H."/>
            <person name="Horinouchi K."/>
            <person name="Shiosaka S."/>
        </authorList>
    </citation>
    <scope>FUNCTION</scope>
    <scope>DISRUPTION PHENOTYPE</scope>
</reference>
<reference key="21">
    <citation type="journal article" date="2006" name="J. Physiol. (Lond.)">
        <title>Neuropsin is essential for early processes of memory acquisition and Schaffer collateral long-term potentiation in adult mouse hippocampus in vivo.</title>
        <authorList>
            <person name="Tamura H."/>
            <person name="Ishikawa Y."/>
            <person name="Hino N."/>
            <person name="Maeda M."/>
            <person name="Yoshida S."/>
            <person name="Kaku S."/>
            <person name="Shiosaka S."/>
        </authorList>
    </citation>
    <scope>FUNCTION</scope>
    <scope>DISRUPTION PHENOTYPE</scope>
</reference>
<reference key="22">
    <citation type="journal article" date="2007" name="J. Biochem.">
        <title>SerpinB6 is an inhibitor of kallikrein-8 in keratinocytes.</title>
        <authorList>
            <person name="Scott F.L."/>
            <person name="Sun J."/>
            <person name="Whisstock J.C."/>
            <person name="Kato K."/>
            <person name="Bird P.I."/>
        </authorList>
    </citation>
    <scope>SUBCELLULAR LOCATION</scope>
    <scope>TISSUE SPECIFICITY</scope>
</reference>
<reference key="23">
    <citation type="journal article" date="2007" name="J. Biol. Chem.">
        <title>Kallikrein 8 is involved in skin desquamation in cooperation with other kallikreins.</title>
        <authorList>
            <person name="Kishibe M."/>
            <person name="Bando Y."/>
            <person name="Terayama R."/>
            <person name="Namikawa K."/>
            <person name="Takahashi H."/>
            <person name="Hashimoto Y."/>
            <person name="Ishida-Yamamoto A."/>
            <person name="Jiang Y.-P."/>
            <person name="Mitrovic B."/>
            <person name="Perez D."/>
            <person name="Iizuka H."/>
            <person name="Yoshida S."/>
        </authorList>
    </citation>
    <scope>FUNCTION</scope>
    <scope>DISRUPTION PHENOTYPE</scope>
</reference>
<reference key="24">
    <citation type="journal article" date="2007" name="Neuroscience">
        <title>Neuropsin promotes oligodendrocyte death, demyelination and axonal degeneration after spinal cord injury.</title>
        <authorList>
            <person name="Terayama R."/>
            <person name="Bando Y."/>
            <person name="Murakami K."/>
            <person name="Kato K."/>
            <person name="Kishibe M."/>
            <person name="Yoshida S."/>
        </authorList>
    </citation>
    <scope>FUNCTION</scope>
    <scope>TISSUE SPECIFICITY</scope>
    <scope>INDUCTION</scope>
    <scope>DISRUPTION PHENOTYPE</scope>
</reference>
<reference key="25">
    <citation type="journal article" date="1999" name="J. Biol. Chem.">
        <title>Crystal structure of neuropsin, a hippocampal protease involved in kindling epileptogenesis.</title>
        <authorList>
            <person name="Kishi T."/>
            <person name="Kato M."/>
            <person name="Shimizu T."/>
            <person name="Kato K."/>
            <person name="Matsumoto K."/>
            <person name="Yoshida S."/>
            <person name="Shiosaka S."/>
            <person name="Hakoshima T."/>
        </authorList>
    </citation>
    <scope>X-RAY CRYSTALLOGRAPHY (2.1 ANGSTROMS) OF 33-257</scope>
    <source>
        <tissue>Hippocampus</tissue>
    </source>
</reference>
<dbReference type="EC" id="3.4.21.118"/>
<dbReference type="EMBL" id="D30785">
    <property type="protein sequence ID" value="BAA06451.1"/>
    <property type="molecule type" value="mRNA"/>
</dbReference>
<dbReference type="EMBL" id="AB032202">
    <property type="protein sequence ID" value="BAA92435.1"/>
    <property type="molecule type" value="Genomic_DNA"/>
</dbReference>
<dbReference type="EMBL" id="BC055895">
    <property type="protein sequence ID" value="AAH55895.1"/>
    <property type="molecule type" value="mRNA"/>
</dbReference>
<dbReference type="EMBL" id="AB074296">
    <property type="protein sequence ID" value="BAB92021.1"/>
    <property type="molecule type" value="mRNA"/>
</dbReference>
<dbReference type="CCDS" id="CCDS21182.1"/>
<dbReference type="PIR" id="I56559">
    <property type="entry name" value="I56559"/>
</dbReference>
<dbReference type="RefSeq" id="NP_001311327.1">
    <property type="nucleotide sequence ID" value="NM_001324398.1"/>
</dbReference>
<dbReference type="RefSeq" id="NP_032966.1">
    <property type="nucleotide sequence ID" value="NM_008940.3"/>
</dbReference>
<dbReference type="PDB" id="1NPM">
    <property type="method" value="X-ray"/>
    <property type="resolution" value="2.10 A"/>
    <property type="chains" value="A/B=33-257"/>
</dbReference>
<dbReference type="PDBsum" id="1NPM"/>
<dbReference type="SMR" id="Q61955"/>
<dbReference type="BioGRID" id="234416">
    <property type="interactions" value="2"/>
</dbReference>
<dbReference type="FunCoup" id="Q61955">
    <property type="interactions" value="58"/>
</dbReference>
<dbReference type="STRING" id="10090.ENSMUSP00000082588"/>
<dbReference type="MEROPS" id="S01.244"/>
<dbReference type="GlyCosmos" id="Q61955">
    <property type="glycosylation" value="1 site, No reported glycans"/>
</dbReference>
<dbReference type="GlyGen" id="Q61955">
    <property type="glycosylation" value="1 site"/>
</dbReference>
<dbReference type="iPTMnet" id="Q61955"/>
<dbReference type="PhosphoSitePlus" id="Q61955"/>
<dbReference type="PaxDb" id="10090-ENSMUSP00000082588"/>
<dbReference type="ProteomicsDB" id="263661"/>
<dbReference type="Antibodypedia" id="32417">
    <property type="antibodies" value="1347 antibodies from 32 providers"/>
</dbReference>
<dbReference type="DNASU" id="259277"/>
<dbReference type="Ensembl" id="ENSMUST00000085461.4">
    <property type="protein sequence ID" value="ENSMUSP00000082588.3"/>
    <property type="gene ID" value="ENSMUSG00000064023.5"/>
</dbReference>
<dbReference type="GeneID" id="259277"/>
<dbReference type="KEGG" id="mmu:259277"/>
<dbReference type="UCSC" id="uc009gns.1">
    <property type="organism name" value="mouse"/>
</dbReference>
<dbReference type="AGR" id="MGI:1343327"/>
<dbReference type="CTD" id="11202"/>
<dbReference type="MGI" id="MGI:1343327">
    <property type="gene designation" value="Klk8"/>
</dbReference>
<dbReference type="VEuPathDB" id="HostDB:ENSMUSG00000064023"/>
<dbReference type="eggNOG" id="KOG3627">
    <property type="taxonomic scope" value="Eukaryota"/>
</dbReference>
<dbReference type="GeneTree" id="ENSGT01020000230389"/>
<dbReference type="HOGENOM" id="CLU_006842_1_1_1"/>
<dbReference type="InParanoid" id="Q61955"/>
<dbReference type="OMA" id="GMTCYSG"/>
<dbReference type="OrthoDB" id="546450at2759"/>
<dbReference type="PhylomeDB" id="Q61955"/>
<dbReference type="TreeFam" id="TF331065"/>
<dbReference type="BRENDA" id="3.4.21.118">
    <property type="organism ID" value="3474"/>
</dbReference>
<dbReference type="Reactome" id="R-MMU-6809371">
    <property type="pathway name" value="Formation of the cornified envelope"/>
</dbReference>
<dbReference type="BioGRID-ORCS" id="259277">
    <property type="hits" value="3 hits in 79 CRISPR screens"/>
</dbReference>
<dbReference type="ChiTaRS" id="Klk1b8">
    <property type="organism name" value="mouse"/>
</dbReference>
<dbReference type="EvolutionaryTrace" id="Q61955"/>
<dbReference type="PRO" id="PR:Q61955"/>
<dbReference type="Proteomes" id="UP000000589">
    <property type="component" value="Chromosome 7"/>
</dbReference>
<dbReference type="RNAct" id="Q61955">
    <property type="molecule type" value="protein"/>
</dbReference>
<dbReference type="Bgee" id="ENSMUSG00000064023">
    <property type="expression patterns" value="Expressed in lip and 175 other cell types or tissues"/>
</dbReference>
<dbReference type="ExpressionAtlas" id="Q61955">
    <property type="expression patterns" value="baseline and differential"/>
</dbReference>
<dbReference type="GO" id="GO:0005737">
    <property type="term" value="C:cytoplasm"/>
    <property type="evidence" value="ECO:0000314"/>
    <property type="project" value="UniProtKB"/>
</dbReference>
<dbReference type="GO" id="GO:0005615">
    <property type="term" value="C:extracellular space"/>
    <property type="evidence" value="ECO:0000314"/>
    <property type="project" value="UniProtKB"/>
</dbReference>
<dbReference type="GO" id="GO:0097180">
    <property type="term" value="C:serine protease inhibitor complex"/>
    <property type="evidence" value="ECO:0007669"/>
    <property type="project" value="Ensembl"/>
</dbReference>
<dbReference type="GO" id="GO:0008233">
    <property type="term" value="F:peptidase activity"/>
    <property type="evidence" value="ECO:0000314"/>
    <property type="project" value="MGI"/>
</dbReference>
<dbReference type="GO" id="GO:0004252">
    <property type="term" value="F:serine-type endopeptidase activity"/>
    <property type="evidence" value="ECO:0000314"/>
    <property type="project" value="UniProtKB"/>
</dbReference>
<dbReference type="GO" id="GO:0043616">
    <property type="term" value="P:keratinocyte proliferation"/>
    <property type="evidence" value="ECO:0000315"/>
    <property type="project" value="UniProtKB"/>
</dbReference>
<dbReference type="GO" id="GO:0007613">
    <property type="term" value="P:memory"/>
    <property type="evidence" value="ECO:0000315"/>
    <property type="project" value="UniProtKB"/>
</dbReference>
<dbReference type="GO" id="GO:0048812">
    <property type="term" value="P:neuron projection morphogenesis"/>
    <property type="evidence" value="ECO:0000314"/>
    <property type="project" value="UniProtKB"/>
</dbReference>
<dbReference type="GO" id="GO:0006508">
    <property type="term" value="P:proteolysis"/>
    <property type="evidence" value="ECO:0007669"/>
    <property type="project" value="UniProtKB-KW"/>
</dbReference>
<dbReference type="GO" id="GO:0050807">
    <property type="term" value="P:regulation of synapse organization"/>
    <property type="evidence" value="ECO:0000315"/>
    <property type="project" value="UniProtKB"/>
</dbReference>
<dbReference type="GO" id="GO:0009611">
    <property type="term" value="P:response to wounding"/>
    <property type="evidence" value="ECO:0000314"/>
    <property type="project" value="UniProtKB"/>
</dbReference>
<dbReference type="GO" id="GO:0050808">
    <property type="term" value="P:synapse organization"/>
    <property type="evidence" value="ECO:0000315"/>
    <property type="project" value="MGI"/>
</dbReference>
<dbReference type="CDD" id="cd00190">
    <property type="entry name" value="Tryp_SPc"/>
    <property type="match status" value="1"/>
</dbReference>
<dbReference type="FunFam" id="2.40.10.10:FF:000087">
    <property type="entry name" value="Kallikrein 8 (Neuropsin/ovasin)"/>
    <property type="match status" value="1"/>
</dbReference>
<dbReference type="FunFam" id="2.40.10.10:FF:000041">
    <property type="entry name" value="kallikrein-6 isoform X2"/>
    <property type="match status" value="1"/>
</dbReference>
<dbReference type="Gene3D" id="2.40.10.10">
    <property type="entry name" value="Trypsin-like serine proteases"/>
    <property type="match status" value="2"/>
</dbReference>
<dbReference type="InterPro" id="IPR009003">
    <property type="entry name" value="Peptidase_S1_PA"/>
</dbReference>
<dbReference type="InterPro" id="IPR043504">
    <property type="entry name" value="Peptidase_S1_PA_chymotrypsin"/>
</dbReference>
<dbReference type="InterPro" id="IPR001314">
    <property type="entry name" value="Peptidase_S1A"/>
</dbReference>
<dbReference type="InterPro" id="IPR001254">
    <property type="entry name" value="Trypsin_dom"/>
</dbReference>
<dbReference type="InterPro" id="IPR018114">
    <property type="entry name" value="TRYPSIN_HIS"/>
</dbReference>
<dbReference type="InterPro" id="IPR033116">
    <property type="entry name" value="TRYPSIN_SER"/>
</dbReference>
<dbReference type="PANTHER" id="PTHR24271:SF62">
    <property type="entry name" value="KALLIKREIN-8"/>
    <property type="match status" value="1"/>
</dbReference>
<dbReference type="PANTHER" id="PTHR24271">
    <property type="entry name" value="KALLIKREIN-RELATED"/>
    <property type="match status" value="1"/>
</dbReference>
<dbReference type="Pfam" id="PF00089">
    <property type="entry name" value="Trypsin"/>
    <property type="match status" value="1"/>
</dbReference>
<dbReference type="PRINTS" id="PR00722">
    <property type="entry name" value="CHYMOTRYPSIN"/>
</dbReference>
<dbReference type="SMART" id="SM00020">
    <property type="entry name" value="Tryp_SPc"/>
    <property type="match status" value="1"/>
</dbReference>
<dbReference type="SUPFAM" id="SSF50494">
    <property type="entry name" value="Trypsin-like serine proteases"/>
    <property type="match status" value="1"/>
</dbReference>
<dbReference type="PROSITE" id="PS50240">
    <property type="entry name" value="TRYPSIN_DOM"/>
    <property type="match status" value="1"/>
</dbReference>
<dbReference type="PROSITE" id="PS00134">
    <property type="entry name" value="TRYPSIN_HIS"/>
    <property type="match status" value="1"/>
</dbReference>
<dbReference type="PROSITE" id="PS00135">
    <property type="entry name" value="TRYPSIN_SER"/>
    <property type="match status" value="1"/>
</dbReference>
<proteinExistence type="evidence at protein level"/>
<name>KLK8_MOUSE</name>
<accession>Q61955</accession>
<accession>Q8K5D7</accession>
<comment type="function">
    <text evidence="6 10 12 14 15 16 17 23">Serine protease which is capable of degrading a number of proteins such as casein, fibrinogen, kininogen, fibronectin and collagen type IV. Also cleaves L1CAM in response to increased neural activity. Induces neurite outgrowth and fasciculation of cultured hippocampal neurons. Plays a role in the formation and maturation of orphan and small synaptic boutons in the Schaffer-collateral pathway, regulates Schaffer-collateral long-term potentiation in the hippocampus and is required for memory acquisition and synaptic plasticity. Involved in skin desquamation and keratinocyte proliferation. Plays a role in the secondary phase of pathogenesis following spinal cord injury.</text>
</comment>
<comment type="catalytic activity">
    <reaction>
        <text>Cleavage of amide substrates following the basic amino acids Arg or Lys at the P1 position, with a preference for Arg over Lys.</text>
        <dbReference type="EC" id="3.4.21.118"/>
    </reaction>
</comment>
<comment type="activity regulation">
    <text evidence="23">Strongly inhibited by diisopropyl fluorophosphate, leupeptin and (4-amidinophenyl)methanesulfonyl 1-fluoride.</text>
</comment>
<comment type="biophysicochemical properties">
    <kinetics>
        <KM evidence="23">300 uM for Boc-Val-Pro-Arg-MCA</KM>
        <KM evidence="23">540 uM for Boc-Phe-Ser-Arg-MCA</KM>
        <KM evidence="23">280 uM for D-Val-Leu-Arg-MCA</KM>
    </kinetics>
</comment>
<comment type="subunit">
    <text evidence="1">Interacts with SPINK9.</text>
</comment>
<comment type="subcellular location">
    <subcellularLocation>
        <location>Secreted</location>
    </subcellularLocation>
    <subcellularLocation>
        <location>Cytoplasm</location>
    </subcellularLocation>
    <text>Shows a cytoplasmic distribution in the keratinocytes.</text>
</comment>
<comment type="tissue specificity">
    <text evidence="11 17 18 19 20 24 25">Expressed in the limbic system of mouse brain and is localized at highest concentration in pyramidal neurons of the hippocampal CA1-3 subfields. Also detected in spinal cord gray matter and in keratinized stratified epithelia of epidermis, hair, tongue, palate, nasal cavity, pharynges, esophagus and forestomach. In skin and mucus membranes, expressed in stratum spinosum and stratum granulosum. Expressed during estrus in vaginal epithelial cells but not stromal cells. Within the vaginal epithelium, expressed in prickle cells, granular cells and parakeratotic cells but not in basal cells. Not expressed in uterus. Expressed in the keratinocytes.</text>
</comment>
<comment type="developmental stage">
    <text evidence="20">Expression is detected in the brain from embryonic day 12 and continues into adulthood.</text>
</comment>
<comment type="induction">
    <text evidence="4 5 8 13 17 21 22 25">By chemical/incision-induced brain injury which leads to increased expression in axon fiber bundles of the peri-lesioned region, by electrically-induced seizure (kindling) in brain, by UV irradiation in skin and by incisional and chemically-induced skin wounding which causes epidermal proliferation and hyperkeratosis. Induced by chemically-induced oxidative stress which leads to increased expression in the hippocampal pyramidal neurons 2 hours after treatment. Levels then decrease, drop to 60% of pretreated control levels at day 7 when avoidance learning is impaired and return to control levels at day 30. Also induced by spinal crush injury which leads to increased expression in spinal cord white matter adjacent to the lesion. Expression increases between days 1-14 post-injury with a peak at day 4.</text>
</comment>
<comment type="mass spectrometry" mass="26229.0" method="MALDI" evidence="23"/>
<comment type="disruption phenotype">
    <text evidence="7 9 13 14 15 16 17">Mice display marked abnormalities of synapses and neurons in the CA1 subfield of the hippocampus with enlarged and elongated pyramidal cell soma and reduced asymmetrical synapse numbers. Mutants also display impaired spatial memory acquisition, increased hippocampal susceptibility to hyperexcitability in response to repetitive afferent stimulation and prolonged recovery of UV-irradiated skin. Following spinal cord injury, mutants display reduced demyelination, oligodendrocyte death and axonal degeneration, and inproved hind limb recovery, suggesting that attenuation of neuropsin activity may be beneficial in the treatment of spinal cord injury. Blocking of Klk8 activity by intraventricular injection with monoclonal antibodies reduces or eliminates epileptic seizures in kindled mice.</text>
</comment>
<comment type="similarity">
    <text evidence="3">Belongs to the peptidase S1 family. Kallikrein subfamily.</text>
</comment>
<evidence type="ECO:0000250" key="1"/>
<evidence type="ECO:0000255" key="2"/>
<evidence type="ECO:0000255" key="3">
    <source>
        <dbReference type="PROSITE-ProRule" id="PRU00274"/>
    </source>
</evidence>
<evidence type="ECO:0000269" key="4">
    <source>
    </source>
</evidence>
<evidence type="ECO:0000269" key="5">
    <source>
    </source>
</evidence>
<evidence type="ECO:0000269" key="6">
    <source>
    </source>
</evidence>
<evidence type="ECO:0000269" key="7">
    <source>
    </source>
</evidence>
<evidence type="ECO:0000269" key="8">
    <source>
    </source>
</evidence>
<evidence type="ECO:0000269" key="9">
    <source>
    </source>
</evidence>
<evidence type="ECO:0000269" key="10">
    <source>
    </source>
</evidence>
<evidence type="ECO:0000269" key="11">
    <source>
    </source>
</evidence>
<evidence type="ECO:0000269" key="12">
    <source>
    </source>
</evidence>
<evidence type="ECO:0000269" key="13">
    <source>
    </source>
</evidence>
<evidence type="ECO:0000269" key="14">
    <source>
    </source>
</evidence>
<evidence type="ECO:0000269" key="15">
    <source>
    </source>
</evidence>
<evidence type="ECO:0000269" key="16">
    <source>
    </source>
</evidence>
<evidence type="ECO:0000269" key="17">
    <source>
    </source>
</evidence>
<evidence type="ECO:0000269" key="18">
    <source>
    </source>
</evidence>
<evidence type="ECO:0000269" key="19">
    <source>
    </source>
</evidence>
<evidence type="ECO:0000269" key="20">
    <source>
    </source>
</evidence>
<evidence type="ECO:0000269" key="21">
    <source>
    </source>
</evidence>
<evidence type="ECO:0000269" key="22">
    <source>
    </source>
</evidence>
<evidence type="ECO:0000269" key="23">
    <source>
    </source>
</evidence>
<evidence type="ECO:0000269" key="24">
    <source>
    </source>
</evidence>
<evidence type="ECO:0000269" key="25">
    <source>
    </source>
</evidence>
<evidence type="ECO:0007829" key="26">
    <source>
        <dbReference type="PDB" id="1NPM"/>
    </source>
</evidence>
<organism>
    <name type="scientific">Mus musculus</name>
    <name type="common">Mouse</name>
    <dbReference type="NCBI Taxonomy" id="10090"/>
    <lineage>
        <taxon>Eukaryota</taxon>
        <taxon>Metazoa</taxon>
        <taxon>Chordata</taxon>
        <taxon>Craniata</taxon>
        <taxon>Vertebrata</taxon>
        <taxon>Euteleostomi</taxon>
        <taxon>Mammalia</taxon>
        <taxon>Eutheria</taxon>
        <taxon>Euarchontoglires</taxon>
        <taxon>Glires</taxon>
        <taxon>Rodentia</taxon>
        <taxon>Myomorpha</taxon>
        <taxon>Muroidea</taxon>
        <taxon>Muridae</taxon>
        <taxon>Murinae</taxon>
        <taxon>Mus</taxon>
        <taxon>Mus</taxon>
    </lineage>
</organism>
<protein>
    <recommendedName>
        <fullName>Kallikrein-8</fullName>
        <shortName>mK8</shortName>
        <ecNumber>3.4.21.118</ecNumber>
    </recommendedName>
    <alternativeName>
        <fullName>Neuropsin</fullName>
        <shortName>NP</shortName>
    </alternativeName>
    <alternativeName>
        <fullName>Serine protease 19</fullName>
    </alternativeName>
</protein>
<sequence length="260" mass="28524">MGRPPPCAIQPWILLLLFMGAWAGLTRAQGSKILEGRECIPHSQPWQAALFQGERLICGGVLVGDRWVLTAAHCKKQKYSVRLGDHSLQSRDQPEQEIQVAQSIQHPCYNNSNPEDHSHDIMLIRLQNSANLGDKVKPVQLANLCPKVGQKCIISGWGTVTSPQENFPNTLNCAEVKIYSQNKCERAYPGKITEGMVCAGSSNGADTCQGDSGGPLVCDGMLQGITSWGSDPCGKPEKPGVYTKICRYTTWIKKTMDNRD</sequence>
<keyword id="KW-0002">3D-structure</keyword>
<keyword id="KW-0963">Cytoplasm</keyword>
<keyword id="KW-0903">Direct protein sequencing</keyword>
<keyword id="KW-1015">Disulfide bond</keyword>
<keyword id="KW-0325">Glycoprotein</keyword>
<keyword id="KW-0378">Hydrolase</keyword>
<keyword id="KW-0645">Protease</keyword>
<keyword id="KW-1185">Reference proteome</keyword>
<keyword id="KW-0964">Secreted</keyword>
<keyword id="KW-0720">Serine protease</keyword>
<keyword id="KW-0732">Signal</keyword>
<keyword id="KW-0865">Zymogen</keyword>
<feature type="signal peptide" evidence="2">
    <location>
        <begin position="1"/>
        <end position="28"/>
    </location>
</feature>
<feature type="propeptide" id="PRO_0000027948" evidence="23">
    <location>
        <begin position="29"/>
        <end position="32"/>
    </location>
</feature>
<feature type="chain" id="PRO_0000027949" description="Kallikrein-8">
    <location>
        <begin position="33"/>
        <end position="260"/>
    </location>
</feature>
<feature type="domain" description="Peptidase S1" evidence="3">
    <location>
        <begin position="33"/>
        <end position="257"/>
    </location>
</feature>
<feature type="active site" description="Charge relay system" evidence="1">
    <location>
        <position position="73"/>
    </location>
</feature>
<feature type="active site" description="Charge relay system" evidence="1">
    <location>
        <position position="120"/>
    </location>
</feature>
<feature type="active site" description="Charge relay system" evidence="1">
    <location>
        <position position="212"/>
    </location>
</feature>
<feature type="glycosylation site" description="N-linked (GlcNAc...) asparagine" evidence="2">
    <location>
        <position position="110"/>
    </location>
</feature>
<feature type="disulfide bond">
    <location>
        <begin position="39"/>
        <end position="173"/>
    </location>
</feature>
<feature type="disulfide bond">
    <location>
        <begin position="58"/>
        <end position="74"/>
    </location>
</feature>
<feature type="disulfide bond">
    <location>
        <begin position="145"/>
        <end position="246"/>
    </location>
</feature>
<feature type="disulfide bond">
    <location>
        <begin position="152"/>
        <end position="218"/>
    </location>
</feature>
<feature type="disulfide bond">
    <location>
        <begin position="184"/>
        <end position="198"/>
    </location>
</feature>
<feature type="disulfide bond">
    <location>
        <begin position="208"/>
        <end position="233"/>
    </location>
</feature>
<feature type="strand" evidence="26">
    <location>
        <begin position="47"/>
        <end position="52"/>
    </location>
</feature>
<feature type="strand" evidence="26">
    <location>
        <begin position="55"/>
        <end position="64"/>
    </location>
</feature>
<feature type="strand" evidence="26">
    <location>
        <begin position="67"/>
        <end position="70"/>
    </location>
</feature>
<feature type="helix" evidence="26">
    <location>
        <begin position="72"/>
        <end position="74"/>
    </location>
</feature>
<feature type="strand" evidence="26">
    <location>
        <begin position="80"/>
        <end position="84"/>
    </location>
</feature>
<feature type="strand" evidence="26">
    <location>
        <begin position="96"/>
        <end position="98"/>
    </location>
</feature>
<feature type="strand" evidence="26">
    <location>
        <begin position="100"/>
        <end position="105"/>
    </location>
</feature>
<feature type="strand" evidence="26">
    <location>
        <begin position="122"/>
        <end position="128"/>
    </location>
</feature>
<feature type="strand" evidence="26">
    <location>
        <begin position="133"/>
        <end position="136"/>
    </location>
</feature>
<feature type="strand" evidence="26">
    <location>
        <begin position="151"/>
        <end position="158"/>
    </location>
</feature>
<feature type="strand" evidence="26">
    <location>
        <begin position="160"/>
        <end position="164"/>
    </location>
</feature>
<feature type="strand" evidence="26">
    <location>
        <begin position="172"/>
        <end position="178"/>
    </location>
</feature>
<feature type="helix" evidence="26">
    <location>
        <begin position="181"/>
        <end position="187"/>
    </location>
</feature>
<feature type="turn" evidence="26">
    <location>
        <begin position="189"/>
        <end position="191"/>
    </location>
</feature>
<feature type="strand" evidence="26">
    <location>
        <begin position="196"/>
        <end position="200"/>
    </location>
</feature>
<feature type="strand" evidence="26">
    <location>
        <begin position="215"/>
        <end position="218"/>
    </location>
</feature>
<feature type="strand" evidence="26">
    <location>
        <begin position="221"/>
        <end position="228"/>
    </location>
</feature>
<feature type="strand" evidence="26">
    <location>
        <begin position="231"/>
        <end position="233"/>
    </location>
</feature>
<feature type="strand" evidence="26">
    <location>
        <begin position="240"/>
        <end position="244"/>
    </location>
</feature>
<feature type="helix" evidence="26">
    <location>
        <begin position="245"/>
        <end position="256"/>
    </location>
</feature>